<accession>P23620</accession>
<feature type="chain" id="PRO_0000081190" description="Phosphate regulon transcriptional regulatory protein PhoB">
    <location>
        <begin position="1"/>
        <end position="229"/>
    </location>
</feature>
<feature type="domain" description="Response regulatory" evidence="1">
    <location>
        <begin position="5"/>
        <end position="121"/>
    </location>
</feature>
<feature type="DNA-binding region" description="OmpR/PhoB-type" evidence="2">
    <location>
        <begin position="130"/>
        <end position="227"/>
    </location>
</feature>
<feature type="modified residue" description="4-aspartylphosphate" evidence="1">
    <location>
        <position position="54"/>
    </location>
</feature>
<feature type="sequence conflict" description="In Ref. 1; no nucleotide entry." evidence="4" ref="1">
    <original>L</original>
    <variation>V</variation>
    <location>
        <position position="23"/>
    </location>
</feature>
<feature type="sequence conflict" description="In Ref. 1; no nucleotide entry." evidence="4" ref="1">
    <original>D</original>
    <variation>H</variation>
    <location>
        <position position="49"/>
    </location>
</feature>
<feature type="sequence conflict" description="In Ref. 1; no nucleotide entry." evidence="4" ref="1">
    <original>V</original>
    <variation>L</variation>
    <location>
        <position position="76"/>
    </location>
</feature>
<feature type="sequence conflict" description="In Ref. 1; no nucleotide entry." evidence="4" ref="1">
    <original>V</original>
    <variation>A</variation>
    <location>
        <position position="98"/>
    </location>
</feature>
<feature type="sequence conflict" description="In Ref. 1; no nucleotide entry." evidence="4" ref="1">
    <original>D</original>
    <variation>H</variation>
    <location>
        <position position="128"/>
    </location>
</feature>
<feature type="sequence conflict" description="In Ref. 1; no nucleotide entry." evidence="4" ref="1">
    <original>R</original>
    <variation>G</variation>
    <location>
        <position position="162"/>
    </location>
</feature>
<feature type="sequence conflict" description="In Ref. 1; no nucleotide entry." evidence="4" ref="1">
    <original>LL</original>
    <variation>RR</variation>
    <location>
        <begin position="180"/>
        <end position="181"/>
    </location>
</feature>
<feature type="sequence conflict" description="In Ref. 1; no nucleotide entry." evidence="4" ref="1">
    <original>VH</original>
    <variation>MD</variation>
    <location>
        <begin position="198"/>
        <end position="199"/>
    </location>
</feature>
<comment type="function">
    <text>This protein is a positive regulator for the phosphate regulon. Transcription of this operon is positively regulated by PhoB and PhoR when phosphate is limited.</text>
</comment>
<comment type="subcellular location">
    <subcellularLocation>
        <location>Cytoplasm</location>
    </subcellularLocation>
</comment>
<comment type="disruption phenotype">
    <text evidence="3">Loss of swarming in the presence and absence of phosphate; double phoB-pstS deletions act like phoB deletions.</text>
</comment>
<evidence type="ECO:0000255" key="1">
    <source>
        <dbReference type="PROSITE-ProRule" id="PRU00169"/>
    </source>
</evidence>
<evidence type="ECO:0000255" key="2">
    <source>
        <dbReference type="PROSITE-ProRule" id="PRU01091"/>
    </source>
</evidence>
<evidence type="ECO:0000269" key="3">
    <source>
    </source>
</evidence>
<evidence type="ECO:0000305" key="4"/>
<organism>
    <name type="scientific">Pseudomonas aeruginosa (strain ATCC 15692 / DSM 22644 / CIP 104116 / JCM 14847 / LMG 12228 / 1C / PRS 101 / PAO1)</name>
    <dbReference type="NCBI Taxonomy" id="208964"/>
    <lineage>
        <taxon>Bacteria</taxon>
        <taxon>Pseudomonadati</taxon>
        <taxon>Pseudomonadota</taxon>
        <taxon>Gammaproteobacteria</taxon>
        <taxon>Pseudomonadales</taxon>
        <taxon>Pseudomonadaceae</taxon>
        <taxon>Pseudomonas</taxon>
    </lineage>
</organism>
<sequence length="229" mass="25712">MVGKTILIVDDEAPIREMIAVALEMAGYECLEAENTQQAHAVIVDRKPDLILLDWMLPGTSGIELARRLKRDELTVDIPIIMLTAKGEEDNKIQGLEVGADDYITKPFSPRELVARLKAVLRRTGPGDSEAPIEVGGLLLDPISHRVTIDGKPAEMGPTEYRLLQFFMTHQERAYTRGQLLDQVWGGNVYVEERTVDVHIRRLRKALGEVYENLVQTVRGTGYRFSTKS</sequence>
<name>PHOB_PSEAE</name>
<reference key="1">
    <citation type="journal article" date="1990" name="J. Bacteriol.">
        <title>Nucleotide sequence of the Pseudomonas aeruginosa phoB gene, the regulatory gene for the phosphate regulon.</title>
        <authorList>
            <person name="Anba J."/>
            <person name="Bidaud M."/>
            <person name="Vasil M.L."/>
            <person name="Lazdunski A."/>
        </authorList>
    </citation>
    <scope>NUCLEOTIDE SEQUENCE [GENOMIC DNA]</scope>
</reference>
<reference key="2">
    <citation type="journal article" date="2000" name="Nature">
        <title>Complete genome sequence of Pseudomonas aeruginosa PAO1, an opportunistic pathogen.</title>
        <authorList>
            <person name="Stover C.K."/>
            <person name="Pham X.-Q.T."/>
            <person name="Erwin A.L."/>
            <person name="Mizoguchi S.D."/>
            <person name="Warrener P."/>
            <person name="Hickey M.J."/>
            <person name="Brinkman F.S.L."/>
            <person name="Hufnagle W.O."/>
            <person name="Kowalik D.J."/>
            <person name="Lagrou M."/>
            <person name="Garber R.L."/>
            <person name="Goltry L."/>
            <person name="Tolentino E."/>
            <person name="Westbrock-Wadman S."/>
            <person name="Yuan Y."/>
            <person name="Brody L.L."/>
            <person name="Coulter S.N."/>
            <person name="Folger K.R."/>
            <person name="Kas A."/>
            <person name="Larbig K."/>
            <person name="Lim R.M."/>
            <person name="Smith K.A."/>
            <person name="Spencer D.H."/>
            <person name="Wong G.K.-S."/>
            <person name="Wu Z."/>
            <person name="Paulsen I.T."/>
            <person name="Reizer J."/>
            <person name="Saier M.H. Jr."/>
            <person name="Hancock R.E.W."/>
            <person name="Lory S."/>
            <person name="Olson M.V."/>
        </authorList>
    </citation>
    <scope>NUCLEOTIDE SEQUENCE [LARGE SCALE GENOMIC DNA]</scope>
    <source>
        <strain>ATCC 15692 / DSM 22644 / CIP 104116 / JCM 14847 / LMG 12228 / 1C / PRS 101 / PAO1</strain>
    </source>
</reference>
<reference key="3">
    <citation type="journal article" date="2013" name="PLoS ONE">
        <title>The effect of pstS and phoB on quorum sensing and swarming motility in Pseudomonas aeruginosa.</title>
        <authorList>
            <person name="Blus-Kadosh I."/>
            <person name="Zilka A."/>
            <person name="Yerushalmi G."/>
            <person name="Banin E."/>
        </authorList>
    </citation>
    <scope>DISRUPTION PHENOTYPE</scope>
    <source>
        <strain>ATCC 15692 / DSM 22644 / CIP 104116 / JCM 14847 / LMG 12228 / 1C / PRS 101 / PAO1</strain>
    </source>
</reference>
<keyword id="KW-0010">Activator</keyword>
<keyword id="KW-0963">Cytoplasm</keyword>
<keyword id="KW-0238">DNA-binding</keyword>
<keyword id="KW-0592">Phosphate transport</keyword>
<keyword id="KW-0597">Phosphoprotein</keyword>
<keyword id="KW-1185">Reference proteome</keyword>
<keyword id="KW-0804">Transcription</keyword>
<keyword id="KW-0805">Transcription regulation</keyword>
<keyword id="KW-0813">Transport</keyword>
<keyword id="KW-0902">Two-component regulatory system</keyword>
<gene>
    <name type="primary">phoB</name>
    <name type="ordered locus">PA5360</name>
</gene>
<proteinExistence type="inferred from homology"/>
<dbReference type="EMBL" id="AE004091">
    <property type="protein sequence ID" value="AAG08745.1"/>
    <property type="molecule type" value="Genomic_DNA"/>
</dbReference>
<dbReference type="PIR" id="A37775">
    <property type="entry name" value="A37775"/>
</dbReference>
<dbReference type="PIR" id="C82975">
    <property type="entry name" value="C82975"/>
</dbReference>
<dbReference type="RefSeq" id="NP_254047.1">
    <property type="nucleotide sequence ID" value="NC_002516.2"/>
</dbReference>
<dbReference type="RefSeq" id="WP_003096653.1">
    <property type="nucleotide sequence ID" value="NZ_QZGE01000020.1"/>
</dbReference>
<dbReference type="SMR" id="P23620"/>
<dbReference type="FunCoup" id="P23620">
    <property type="interactions" value="450"/>
</dbReference>
<dbReference type="STRING" id="208964.PA5360"/>
<dbReference type="PaxDb" id="208964-PA5360"/>
<dbReference type="DNASU" id="878438"/>
<dbReference type="GeneID" id="77223891"/>
<dbReference type="GeneID" id="878438"/>
<dbReference type="KEGG" id="pae:PA5360"/>
<dbReference type="PATRIC" id="fig|208964.12.peg.5617"/>
<dbReference type="PseudoCAP" id="PA5360"/>
<dbReference type="HOGENOM" id="CLU_000445_30_4_6"/>
<dbReference type="InParanoid" id="P23620"/>
<dbReference type="OrthoDB" id="9802426at2"/>
<dbReference type="PhylomeDB" id="P23620"/>
<dbReference type="BioCyc" id="PAER208964:G1FZ6-5482-MONOMER"/>
<dbReference type="Proteomes" id="UP000002438">
    <property type="component" value="Chromosome"/>
</dbReference>
<dbReference type="CollecTF" id="EXPREG_00000940"/>
<dbReference type="GO" id="GO:0005829">
    <property type="term" value="C:cytosol"/>
    <property type="evidence" value="ECO:0000318"/>
    <property type="project" value="GO_Central"/>
</dbReference>
<dbReference type="GO" id="GO:0032993">
    <property type="term" value="C:protein-DNA complex"/>
    <property type="evidence" value="ECO:0000318"/>
    <property type="project" value="GO_Central"/>
</dbReference>
<dbReference type="GO" id="GO:0000156">
    <property type="term" value="F:phosphorelay response regulator activity"/>
    <property type="evidence" value="ECO:0000318"/>
    <property type="project" value="GO_Central"/>
</dbReference>
<dbReference type="GO" id="GO:0000976">
    <property type="term" value="F:transcription cis-regulatory region binding"/>
    <property type="evidence" value="ECO:0000318"/>
    <property type="project" value="GO_Central"/>
</dbReference>
<dbReference type="GO" id="GO:0071978">
    <property type="term" value="P:bacterial-type flagellum-dependent swarming motility"/>
    <property type="evidence" value="ECO:0000315"/>
    <property type="project" value="PseudoCAP"/>
</dbReference>
<dbReference type="GO" id="GO:0006817">
    <property type="term" value="P:phosphate ion transport"/>
    <property type="evidence" value="ECO:0007669"/>
    <property type="project" value="UniProtKB-KW"/>
</dbReference>
<dbReference type="GO" id="GO:0080040">
    <property type="term" value="P:positive regulation of cellular response to phosphate starvation"/>
    <property type="evidence" value="ECO:0000315"/>
    <property type="project" value="PseudoCAP"/>
</dbReference>
<dbReference type="GO" id="GO:0045893">
    <property type="term" value="P:positive regulation of DNA-templated transcription"/>
    <property type="evidence" value="ECO:0000270"/>
    <property type="project" value="CollecTF"/>
</dbReference>
<dbReference type="GO" id="GO:0006355">
    <property type="term" value="P:regulation of DNA-templated transcription"/>
    <property type="evidence" value="ECO:0000318"/>
    <property type="project" value="GO_Central"/>
</dbReference>
<dbReference type="CDD" id="cd17618">
    <property type="entry name" value="REC_OmpR_PhoB"/>
    <property type="match status" value="1"/>
</dbReference>
<dbReference type="CDD" id="cd00383">
    <property type="entry name" value="trans_reg_C"/>
    <property type="match status" value="1"/>
</dbReference>
<dbReference type="FunFam" id="3.40.50.2300:FF:000001">
    <property type="entry name" value="DNA-binding response regulator PhoB"/>
    <property type="match status" value="1"/>
</dbReference>
<dbReference type="FunFam" id="1.10.10.10:FF:000011">
    <property type="entry name" value="Phosphate regulon transcriptional regulator PhoB"/>
    <property type="match status" value="1"/>
</dbReference>
<dbReference type="Gene3D" id="3.40.50.2300">
    <property type="match status" value="1"/>
</dbReference>
<dbReference type="Gene3D" id="6.10.250.690">
    <property type="match status" value="1"/>
</dbReference>
<dbReference type="Gene3D" id="1.10.10.10">
    <property type="entry name" value="Winged helix-like DNA-binding domain superfamily/Winged helix DNA-binding domain"/>
    <property type="match status" value="1"/>
</dbReference>
<dbReference type="InterPro" id="IPR011006">
    <property type="entry name" value="CheY-like_superfamily"/>
</dbReference>
<dbReference type="InterPro" id="IPR001867">
    <property type="entry name" value="OmpR/PhoB-type_DNA-bd"/>
</dbReference>
<dbReference type="InterPro" id="IPR016032">
    <property type="entry name" value="Sig_transdc_resp-reg_C-effctor"/>
</dbReference>
<dbReference type="InterPro" id="IPR011879">
    <property type="entry name" value="Sig_transdc_resp-reg_PhoB"/>
</dbReference>
<dbReference type="InterPro" id="IPR001789">
    <property type="entry name" value="Sig_transdc_resp-reg_receiver"/>
</dbReference>
<dbReference type="InterPro" id="IPR039420">
    <property type="entry name" value="WalR-like"/>
</dbReference>
<dbReference type="InterPro" id="IPR036388">
    <property type="entry name" value="WH-like_DNA-bd_sf"/>
</dbReference>
<dbReference type="NCBIfam" id="TIGR02154">
    <property type="entry name" value="PhoB"/>
    <property type="match status" value="1"/>
</dbReference>
<dbReference type="PANTHER" id="PTHR48111:SF40">
    <property type="entry name" value="PHOSPHATE REGULON TRANSCRIPTIONAL REGULATORY PROTEIN PHOB"/>
    <property type="match status" value="1"/>
</dbReference>
<dbReference type="PANTHER" id="PTHR48111">
    <property type="entry name" value="REGULATOR OF RPOS"/>
    <property type="match status" value="1"/>
</dbReference>
<dbReference type="Pfam" id="PF00072">
    <property type="entry name" value="Response_reg"/>
    <property type="match status" value="1"/>
</dbReference>
<dbReference type="Pfam" id="PF00486">
    <property type="entry name" value="Trans_reg_C"/>
    <property type="match status" value="1"/>
</dbReference>
<dbReference type="SMART" id="SM00448">
    <property type="entry name" value="REC"/>
    <property type="match status" value="1"/>
</dbReference>
<dbReference type="SMART" id="SM00862">
    <property type="entry name" value="Trans_reg_C"/>
    <property type="match status" value="1"/>
</dbReference>
<dbReference type="SUPFAM" id="SSF46894">
    <property type="entry name" value="C-terminal effector domain of the bipartite response regulators"/>
    <property type="match status" value="1"/>
</dbReference>
<dbReference type="SUPFAM" id="SSF52172">
    <property type="entry name" value="CheY-like"/>
    <property type="match status" value="1"/>
</dbReference>
<dbReference type="PROSITE" id="PS51755">
    <property type="entry name" value="OMPR_PHOB"/>
    <property type="match status" value="1"/>
</dbReference>
<dbReference type="PROSITE" id="PS50110">
    <property type="entry name" value="RESPONSE_REGULATORY"/>
    <property type="match status" value="1"/>
</dbReference>
<protein>
    <recommendedName>
        <fullName>Phosphate regulon transcriptional regulatory protein PhoB</fullName>
    </recommendedName>
</protein>